<gene>
    <name type="primary">Glt6d1</name>
</gene>
<comment type="cofactor">
    <cofactor evidence="1">
        <name>Mn(2+)</name>
        <dbReference type="ChEBI" id="CHEBI:29035"/>
    </cofactor>
    <text evidence="1">Binds 1 Mn(2+) ion per subunit.</text>
</comment>
<comment type="subcellular location">
    <subcellularLocation>
        <location evidence="3">Membrane</location>
        <topology evidence="3">Single-pass type II membrane protein</topology>
    </subcellularLocation>
</comment>
<comment type="similarity">
    <text evidence="3">Belongs to the glycosyltransferase 6 family.</text>
</comment>
<name>GL6D1_MOUSE</name>
<proteinExistence type="evidence at transcript level"/>
<keyword id="KW-0325">Glycoprotein</keyword>
<keyword id="KW-0328">Glycosyltransferase</keyword>
<keyword id="KW-0472">Membrane</keyword>
<keyword id="KW-1185">Reference proteome</keyword>
<keyword id="KW-0735">Signal-anchor</keyword>
<keyword id="KW-0808">Transferase</keyword>
<keyword id="KW-0812">Transmembrane</keyword>
<keyword id="KW-1133">Transmembrane helix</keyword>
<accession>Q2NKH9</accession>
<reference key="1">
    <citation type="journal article" date="2009" name="PLoS Biol.">
        <title>Lineage-specific biology revealed by a finished genome assembly of the mouse.</title>
        <authorList>
            <person name="Church D.M."/>
            <person name="Goodstadt L."/>
            <person name="Hillier L.W."/>
            <person name="Zody M.C."/>
            <person name="Goldstein S."/>
            <person name="She X."/>
            <person name="Bult C.J."/>
            <person name="Agarwala R."/>
            <person name="Cherry J.L."/>
            <person name="DiCuccio M."/>
            <person name="Hlavina W."/>
            <person name="Kapustin Y."/>
            <person name="Meric P."/>
            <person name="Maglott D."/>
            <person name="Birtle Z."/>
            <person name="Marques A.C."/>
            <person name="Graves T."/>
            <person name="Zhou S."/>
            <person name="Teague B."/>
            <person name="Potamousis K."/>
            <person name="Churas C."/>
            <person name="Place M."/>
            <person name="Herschleb J."/>
            <person name="Runnheim R."/>
            <person name="Forrest D."/>
            <person name="Amos-Landgraf J."/>
            <person name="Schwartz D.C."/>
            <person name="Cheng Z."/>
            <person name="Lindblad-Toh K."/>
            <person name="Eichler E.E."/>
            <person name="Ponting C.P."/>
        </authorList>
    </citation>
    <scope>NUCLEOTIDE SEQUENCE [LARGE SCALE GENOMIC DNA]</scope>
    <source>
        <strain>C57BL/6J</strain>
    </source>
</reference>
<reference key="2">
    <citation type="journal article" date="2004" name="Genome Res.">
        <title>The status, quality, and expansion of the NIH full-length cDNA project: the Mammalian Gene Collection (MGC).</title>
        <authorList>
            <consortium name="The MGC Project Team"/>
        </authorList>
    </citation>
    <scope>NUCLEOTIDE SEQUENCE [LARGE SCALE MRNA]</scope>
</reference>
<dbReference type="EC" id="2.4.1.-"/>
<dbReference type="EMBL" id="AL731682">
    <property type="status" value="NOT_ANNOTATED_CDS"/>
    <property type="molecule type" value="Genomic_DNA"/>
</dbReference>
<dbReference type="EMBL" id="BX649340">
    <property type="status" value="NOT_ANNOTATED_CDS"/>
    <property type="molecule type" value="Genomic_DNA"/>
</dbReference>
<dbReference type="EMBL" id="BC111823">
    <property type="protein sequence ID" value="AAI11824.1"/>
    <property type="molecule type" value="mRNA"/>
</dbReference>
<dbReference type="CCDS" id="CCDS15791.1"/>
<dbReference type="RefSeq" id="NP_001034184.1">
    <property type="nucleotide sequence ID" value="NM_001039095.2"/>
</dbReference>
<dbReference type="SMR" id="Q2NKH9"/>
<dbReference type="FunCoup" id="Q2NKH9">
    <property type="interactions" value="10"/>
</dbReference>
<dbReference type="STRING" id="10090.ENSMUSP00000048642"/>
<dbReference type="CAZy" id="GT6">
    <property type="family name" value="Glycosyltransferase Family 6"/>
</dbReference>
<dbReference type="GlyCosmos" id="Q2NKH9">
    <property type="glycosylation" value="1 site, No reported glycans"/>
</dbReference>
<dbReference type="GlyGen" id="Q2NKH9">
    <property type="glycosylation" value="1 site"/>
</dbReference>
<dbReference type="iPTMnet" id="Q2NKH9"/>
<dbReference type="PhosphoSitePlus" id="Q2NKH9"/>
<dbReference type="PaxDb" id="10090-ENSMUSP00000048642"/>
<dbReference type="ProteomicsDB" id="263361"/>
<dbReference type="Antibodypedia" id="8276">
    <property type="antibodies" value="47 antibodies from 15 providers"/>
</dbReference>
<dbReference type="Ensembl" id="ENSMUST00000038010.5">
    <property type="protein sequence ID" value="ENSMUSP00000048642.5"/>
    <property type="gene ID" value="ENSMUSG00000036401.6"/>
</dbReference>
<dbReference type="GeneID" id="71103"/>
<dbReference type="KEGG" id="mmu:71103"/>
<dbReference type="UCSC" id="uc008itl.1">
    <property type="organism name" value="mouse"/>
</dbReference>
<dbReference type="AGR" id="MGI:1918353"/>
<dbReference type="CTD" id="360203"/>
<dbReference type="MGI" id="MGI:1918353">
    <property type="gene designation" value="Glt6d1"/>
</dbReference>
<dbReference type="VEuPathDB" id="HostDB:ENSMUSG00000036401"/>
<dbReference type="eggNOG" id="ENOG502RU0J">
    <property type="taxonomic scope" value="Eukaryota"/>
</dbReference>
<dbReference type="GeneTree" id="ENSGT00950000182858"/>
<dbReference type="HOGENOM" id="CLU_062445_1_0_1"/>
<dbReference type="InParanoid" id="Q2NKH9"/>
<dbReference type="OMA" id="WLAPILW"/>
<dbReference type="OrthoDB" id="10013941at2759"/>
<dbReference type="PhylomeDB" id="Q2NKH9"/>
<dbReference type="TreeFam" id="TF330991"/>
<dbReference type="BioGRID-ORCS" id="71103">
    <property type="hits" value="4 hits in 78 CRISPR screens"/>
</dbReference>
<dbReference type="PRO" id="PR:Q2NKH9"/>
<dbReference type="Proteomes" id="UP000000589">
    <property type="component" value="Chromosome 2"/>
</dbReference>
<dbReference type="RNAct" id="Q2NKH9">
    <property type="molecule type" value="protein"/>
</dbReference>
<dbReference type="Bgee" id="ENSMUSG00000036401">
    <property type="expression patterns" value="Expressed in seminiferous tubule of testis and 3 other cell types or tissues"/>
</dbReference>
<dbReference type="GO" id="GO:0016020">
    <property type="term" value="C:membrane"/>
    <property type="evidence" value="ECO:0007669"/>
    <property type="project" value="UniProtKB-SubCell"/>
</dbReference>
<dbReference type="GO" id="GO:0016758">
    <property type="term" value="F:hexosyltransferase activity"/>
    <property type="evidence" value="ECO:0007669"/>
    <property type="project" value="InterPro"/>
</dbReference>
<dbReference type="GO" id="GO:0005975">
    <property type="term" value="P:carbohydrate metabolic process"/>
    <property type="evidence" value="ECO:0007669"/>
    <property type="project" value="InterPro"/>
</dbReference>
<dbReference type="CDD" id="cd02515">
    <property type="entry name" value="Glyco_transf_6"/>
    <property type="match status" value="1"/>
</dbReference>
<dbReference type="FunFam" id="3.90.550.10:FF:000022">
    <property type="entry name" value="Histo-blood group ABO system transferase"/>
    <property type="match status" value="1"/>
</dbReference>
<dbReference type="Gene3D" id="3.90.550.10">
    <property type="entry name" value="Spore Coat Polysaccharide Biosynthesis Protein SpsA, Chain A"/>
    <property type="match status" value="1"/>
</dbReference>
<dbReference type="InterPro" id="IPR005076">
    <property type="entry name" value="Glyco_trans_6"/>
</dbReference>
<dbReference type="InterPro" id="IPR029044">
    <property type="entry name" value="Nucleotide-diphossugar_trans"/>
</dbReference>
<dbReference type="PANTHER" id="PTHR10462:SF27">
    <property type="entry name" value="GLYCOSYLTRANSFERASE 6 DOMAIN-CONTAINING PROTEIN 1-RELATED"/>
    <property type="match status" value="1"/>
</dbReference>
<dbReference type="PANTHER" id="PTHR10462">
    <property type="entry name" value="GLYCOSYLTRANSFERASE-RELATED"/>
    <property type="match status" value="1"/>
</dbReference>
<dbReference type="Pfam" id="PF03414">
    <property type="entry name" value="Glyco_transf_6"/>
    <property type="match status" value="1"/>
</dbReference>
<dbReference type="SUPFAM" id="SSF53448">
    <property type="entry name" value="Nucleotide-diphospho-sugar transferases"/>
    <property type="match status" value="1"/>
</dbReference>
<organism>
    <name type="scientific">Mus musculus</name>
    <name type="common">Mouse</name>
    <dbReference type="NCBI Taxonomy" id="10090"/>
    <lineage>
        <taxon>Eukaryota</taxon>
        <taxon>Metazoa</taxon>
        <taxon>Chordata</taxon>
        <taxon>Craniata</taxon>
        <taxon>Vertebrata</taxon>
        <taxon>Euteleostomi</taxon>
        <taxon>Mammalia</taxon>
        <taxon>Eutheria</taxon>
        <taxon>Euarchontoglires</taxon>
        <taxon>Glires</taxon>
        <taxon>Rodentia</taxon>
        <taxon>Myomorpha</taxon>
        <taxon>Muroidea</taxon>
        <taxon>Muridae</taxon>
        <taxon>Murinae</taxon>
        <taxon>Mus</taxon>
        <taxon>Mus</taxon>
    </lineage>
</organism>
<evidence type="ECO:0000250" key="1">
    <source>
        <dbReference type="UniProtKB" id="P14769"/>
    </source>
</evidence>
<evidence type="ECO:0000255" key="2"/>
<evidence type="ECO:0000305" key="3"/>
<protein>
    <recommendedName>
        <fullName>Glycosyltransferase 6 domain-containing protein 1</fullName>
        <ecNumber>2.4.1.-</ecNumber>
    </recommendedName>
</protein>
<feature type="chain" id="PRO_0000311973" description="Glycosyltransferase 6 domain-containing protein 1">
    <location>
        <begin position="1"/>
        <end position="311"/>
    </location>
</feature>
<feature type="topological domain" description="Cytoplasmic" evidence="2">
    <location>
        <begin position="1"/>
        <end position="5"/>
    </location>
</feature>
<feature type="transmembrane region" description="Helical; Signal-anchor for type II membrane protein" evidence="2">
    <location>
        <begin position="6"/>
        <end position="26"/>
    </location>
</feature>
<feature type="topological domain" description="Lumenal" evidence="2">
    <location>
        <begin position="27"/>
        <end position="311"/>
    </location>
</feature>
<feature type="active site" description="Nucleophile" evidence="1">
    <location>
        <position position="266"/>
    </location>
</feature>
<feature type="binding site" evidence="1">
    <location>
        <begin position="85"/>
        <end position="90"/>
    </location>
    <ligand>
        <name>substrate</name>
    </ligand>
</feature>
<feature type="binding site" evidence="1">
    <location>
        <begin position="176"/>
        <end position="178"/>
    </location>
    <ligand>
        <name>substrate</name>
    </ligand>
</feature>
<feature type="binding site" evidence="1">
    <location>
        <begin position="198"/>
        <end position="201"/>
    </location>
    <ligand>
        <name>substrate</name>
    </ligand>
</feature>
<feature type="glycosylation site" description="N-linked (GlcNAc...) asparagine" evidence="2">
    <location>
        <position position="77"/>
    </location>
</feature>
<sequence length="311" mass="37081">MKAKRRILLQLLTFCLFLLLLAKIHFRNHQEEELLLSDWFNPRRRLDVITTTDWLAPIIWEGTFDRKVLETYFRKQNITVGLAVFAVGSLTDKYLDPFLQSASKFFMPGYRVIFYIMVDKYLQLQEMEHNPLQSFQVLKIGKERWWSNFDLMRMKILSEHIRDHIRYEVDFLFSMNINMVFQSEFGVETLSTSVAQLHPWWYFRKRTNLPYERKPTSVAHIPFGLGDFYYAGAIIGGVPFQVLDFAQQYLKGVFLDTENGVNSTYEKYLNKYFFLNKPTKLLSPEYSWDPTFNLPRHVWFVKIAHHPIDTL</sequence>